<reference key="1">
    <citation type="journal article" date="2008" name="Proc. Natl. Acad. Sci. U.S.A.">
        <title>Nitrogen fixation island and rhizosphere competence traits in the genome of root-associated Pseudomonas stutzeri A1501.</title>
        <authorList>
            <person name="Yan Y."/>
            <person name="Yang J."/>
            <person name="Dou Y."/>
            <person name="Chen M."/>
            <person name="Ping S."/>
            <person name="Peng J."/>
            <person name="Lu W."/>
            <person name="Zhang W."/>
            <person name="Yao Z."/>
            <person name="Li H."/>
            <person name="Liu W."/>
            <person name="He S."/>
            <person name="Geng L."/>
            <person name="Zhang X."/>
            <person name="Yang F."/>
            <person name="Yu H."/>
            <person name="Zhan Y."/>
            <person name="Li D."/>
            <person name="Lin Z."/>
            <person name="Wang Y."/>
            <person name="Elmerich C."/>
            <person name="Lin M."/>
            <person name="Jin Q."/>
        </authorList>
    </citation>
    <scope>NUCLEOTIDE SEQUENCE [LARGE SCALE GENOMIC DNA]</scope>
    <source>
        <strain>A1501</strain>
    </source>
</reference>
<gene>
    <name evidence="1" type="primary">argH</name>
    <name type="ordered locus">PST_0521</name>
</gene>
<organism>
    <name type="scientific">Stutzerimonas stutzeri (strain A1501)</name>
    <name type="common">Pseudomonas stutzeri</name>
    <dbReference type="NCBI Taxonomy" id="379731"/>
    <lineage>
        <taxon>Bacteria</taxon>
        <taxon>Pseudomonadati</taxon>
        <taxon>Pseudomonadota</taxon>
        <taxon>Gammaproteobacteria</taxon>
        <taxon>Pseudomonadales</taxon>
        <taxon>Pseudomonadaceae</taxon>
        <taxon>Stutzerimonas</taxon>
    </lineage>
</organism>
<proteinExistence type="inferred from homology"/>
<evidence type="ECO:0000255" key="1">
    <source>
        <dbReference type="HAMAP-Rule" id="MF_00006"/>
    </source>
</evidence>
<keyword id="KW-0028">Amino-acid biosynthesis</keyword>
<keyword id="KW-0055">Arginine biosynthesis</keyword>
<keyword id="KW-0963">Cytoplasm</keyword>
<keyword id="KW-0456">Lyase</keyword>
<keyword id="KW-1185">Reference proteome</keyword>
<comment type="catalytic activity">
    <reaction evidence="1">
        <text>2-(N(omega)-L-arginino)succinate = fumarate + L-arginine</text>
        <dbReference type="Rhea" id="RHEA:24020"/>
        <dbReference type="ChEBI" id="CHEBI:29806"/>
        <dbReference type="ChEBI" id="CHEBI:32682"/>
        <dbReference type="ChEBI" id="CHEBI:57472"/>
        <dbReference type="EC" id="4.3.2.1"/>
    </reaction>
</comment>
<comment type="pathway">
    <text evidence="1">Amino-acid biosynthesis; L-arginine biosynthesis; L-arginine from L-ornithine and carbamoyl phosphate: step 3/3.</text>
</comment>
<comment type="subcellular location">
    <subcellularLocation>
        <location evidence="1">Cytoplasm</location>
    </subcellularLocation>
</comment>
<comment type="similarity">
    <text evidence="1">Belongs to the lyase 1 family. Argininosuccinate lyase subfamily.</text>
</comment>
<sequence>MSTDKTNQSWGGRFSEPVDAFVARFTASVEFDKRLYRHDIMGSIAHATMLAKAGVLTDAERDQIIANLKDIQSEIEAGTFDWRVDLEDVHMNIEARLTDRIGIVGKKLHTGRSRNDQVATDIRLWLRDEIDVILGEITRLQQGLLGLAEAEADTIMPGFTHLQTAQPVTFGHHLLAWFEMLSRDYERLVDCRKRTNRMPLGSAALAGTTYPIQREITCELLGFEAISGNSLDGVSDRDFAIEFCAAASVAMMHLSRFSEELVLWTSAQFQFIDLPDRFCTGSSIMPQKKNPDVPELVRGKTGRVFGALTGLLALMKGQPLAYNKDNQEDKEPLFDAADTLRDSLRAFADMVPAIKPKREIMREAALRGFSTATDLADYLVRKGLPFRDCHEIVGHAVKYGVQTGKDLAEMTLDELRQFSGEIGDDVFAVLTLEGSVNARDHIGGTAPAQVRAAVKRGQALLAGR</sequence>
<feature type="chain" id="PRO_1000000528" description="Argininosuccinate lyase">
    <location>
        <begin position="1"/>
        <end position="464"/>
    </location>
</feature>
<name>ARLY_STUS1</name>
<protein>
    <recommendedName>
        <fullName evidence="1">Argininosuccinate lyase</fullName>
        <shortName evidence="1">ASAL</shortName>
        <ecNumber evidence="1">4.3.2.1</ecNumber>
    </recommendedName>
    <alternativeName>
        <fullName evidence="1">Arginosuccinase</fullName>
    </alternativeName>
</protein>
<dbReference type="EC" id="4.3.2.1" evidence="1"/>
<dbReference type="EMBL" id="CP000304">
    <property type="protein sequence ID" value="ABP78227.1"/>
    <property type="molecule type" value="Genomic_DNA"/>
</dbReference>
<dbReference type="RefSeq" id="WP_011911754.1">
    <property type="nucleotide sequence ID" value="NC_009434.1"/>
</dbReference>
<dbReference type="SMR" id="A4VGX6"/>
<dbReference type="KEGG" id="psa:PST_0521"/>
<dbReference type="eggNOG" id="COG0165">
    <property type="taxonomic scope" value="Bacteria"/>
</dbReference>
<dbReference type="HOGENOM" id="CLU_027272_2_3_6"/>
<dbReference type="UniPathway" id="UPA00068">
    <property type="reaction ID" value="UER00114"/>
</dbReference>
<dbReference type="Proteomes" id="UP000000233">
    <property type="component" value="Chromosome"/>
</dbReference>
<dbReference type="GO" id="GO:0005829">
    <property type="term" value="C:cytosol"/>
    <property type="evidence" value="ECO:0007669"/>
    <property type="project" value="TreeGrafter"/>
</dbReference>
<dbReference type="GO" id="GO:0004056">
    <property type="term" value="F:argininosuccinate lyase activity"/>
    <property type="evidence" value="ECO:0007669"/>
    <property type="project" value="UniProtKB-UniRule"/>
</dbReference>
<dbReference type="GO" id="GO:0042450">
    <property type="term" value="P:arginine biosynthetic process via ornithine"/>
    <property type="evidence" value="ECO:0007669"/>
    <property type="project" value="InterPro"/>
</dbReference>
<dbReference type="GO" id="GO:0006526">
    <property type="term" value="P:L-arginine biosynthetic process"/>
    <property type="evidence" value="ECO:0007669"/>
    <property type="project" value="UniProtKB-UniRule"/>
</dbReference>
<dbReference type="CDD" id="cd01359">
    <property type="entry name" value="Argininosuccinate_lyase"/>
    <property type="match status" value="1"/>
</dbReference>
<dbReference type="FunFam" id="1.10.275.10:FF:000002">
    <property type="entry name" value="Argininosuccinate lyase"/>
    <property type="match status" value="1"/>
</dbReference>
<dbReference type="FunFam" id="1.10.40.30:FF:000001">
    <property type="entry name" value="Argininosuccinate lyase"/>
    <property type="match status" value="1"/>
</dbReference>
<dbReference type="FunFam" id="1.20.200.10:FF:000015">
    <property type="entry name" value="argininosuccinate lyase isoform X2"/>
    <property type="match status" value="1"/>
</dbReference>
<dbReference type="Gene3D" id="1.10.40.30">
    <property type="entry name" value="Fumarase/aspartase (C-terminal domain)"/>
    <property type="match status" value="1"/>
</dbReference>
<dbReference type="Gene3D" id="1.20.200.10">
    <property type="entry name" value="Fumarase/aspartase (Central domain)"/>
    <property type="match status" value="1"/>
</dbReference>
<dbReference type="Gene3D" id="1.10.275.10">
    <property type="entry name" value="Fumarase/aspartase (N-terminal domain)"/>
    <property type="match status" value="1"/>
</dbReference>
<dbReference type="HAMAP" id="MF_00006">
    <property type="entry name" value="Arg_succ_lyase"/>
    <property type="match status" value="1"/>
</dbReference>
<dbReference type="InterPro" id="IPR029419">
    <property type="entry name" value="Arg_succ_lyase_C"/>
</dbReference>
<dbReference type="InterPro" id="IPR009049">
    <property type="entry name" value="Argininosuccinate_lyase"/>
</dbReference>
<dbReference type="InterPro" id="IPR024083">
    <property type="entry name" value="Fumarase/histidase_N"/>
</dbReference>
<dbReference type="InterPro" id="IPR020557">
    <property type="entry name" value="Fumarate_lyase_CS"/>
</dbReference>
<dbReference type="InterPro" id="IPR000362">
    <property type="entry name" value="Fumarate_lyase_fam"/>
</dbReference>
<dbReference type="InterPro" id="IPR022761">
    <property type="entry name" value="Fumarate_lyase_N"/>
</dbReference>
<dbReference type="InterPro" id="IPR008948">
    <property type="entry name" value="L-Aspartase-like"/>
</dbReference>
<dbReference type="NCBIfam" id="TIGR00838">
    <property type="entry name" value="argH"/>
    <property type="match status" value="1"/>
</dbReference>
<dbReference type="PANTHER" id="PTHR43814">
    <property type="entry name" value="ARGININOSUCCINATE LYASE"/>
    <property type="match status" value="1"/>
</dbReference>
<dbReference type="PANTHER" id="PTHR43814:SF1">
    <property type="entry name" value="ARGININOSUCCINATE LYASE"/>
    <property type="match status" value="1"/>
</dbReference>
<dbReference type="Pfam" id="PF14698">
    <property type="entry name" value="ASL_C2"/>
    <property type="match status" value="1"/>
</dbReference>
<dbReference type="Pfam" id="PF00206">
    <property type="entry name" value="Lyase_1"/>
    <property type="match status" value="1"/>
</dbReference>
<dbReference type="PRINTS" id="PR00145">
    <property type="entry name" value="ARGSUCLYASE"/>
</dbReference>
<dbReference type="PRINTS" id="PR00149">
    <property type="entry name" value="FUMRATELYASE"/>
</dbReference>
<dbReference type="SUPFAM" id="SSF48557">
    <property type="entry name" value="L-aspartase-like"/>
    <property type="match status" value="1"/>
</dbReference>
<dbReference type="PROSITE" id="PS00163">
    <property type="entry name" value="FUMARATE_LYASES"/>
    <property type="match status" value="1"/>
</dbReference>
<accession>A4VGX6</accession>